<proteinExistence type="evidence at protein level"/>
<organism>
    <name type="scientific">Torpedo marmorata</name>
    <name type="common">Marbled electric ray</name>
    <dbReference type="NCBI Taxonomy" id="7788"/>
    <lineage>
        <taxon>Eukaryota</taxon>
        <taxon>Metazoa</taxon>
        <taxon>Chordata</taxon>
        <taxon>Craniata</taxon>
        <taxon>Vertebrata</taxon>
        <taxon>Chondrichthyes</taxon>
        <taxon>Elasmobranchii</taxon>
        <taxon>Batoidea</taxon>
        <taxon>Torpediniformes</taxon>
        <taxon>Torpedinidae</taxon>
        <taxon>Torpedo</taxon>
    </lineage>
</organism>
<sequence>VLSEGNKKIIKNLLQKIHSQTEVLGAEALARLFECHPQTKSYFPKFSGFSANDKRVKHHGDLVLKALVDTNDHLDDLPHHLHKLAEKHGKDLLVDPHNFKLFSDCIAVTLAAHLQEKSPETHCAVDKFLEEVTYQLSSLYR</sequence>
<feature type="chain" id="PRO_0000052785" description="Hemoglobin subunit alpha-2">
    <location>
        <begin position="1"/>
        <end position="141"/>
    </location>
</feature>
<feature type="domain" description="Globin" evidence="1">
    <location>
        <begin position="1"/>
        <end position="141"/>
    </location>
</feature>
<feature type="binding site" evidence="1">
    <location>
        <position position="59"/>
    </location>
    <ligand>
        <name>O2</name>
        <dbReference type="ChEBI" id="CHEBI:15379"/>
    </ligand>
</feature>
<feature type="binding site" description="proximal binding residue" evidence="1">
    <location>
        <position position="88"/>
    </location>
    <ligand>
        <name>heme b</name>
        <dbReference type="ChEBI" id="CHEBI:60344"/>
    </ligand>
    <ligandPart>
        <name>Fe</name>
        <dbReference type="ChEBI" id="CHEBI:18248"/>
    </ligandPart>
</feature>
<protein>
    <recommendedName>
        <fullName>Hemoglobin subunit alpha-2</fullName>
    </recommendedName>
    <alternativeName>
        <fullName>Alpha-2-globin</fullName>
    </alternativeName>
    <alternativeName>
        <fullName>Hemoglobin alpha-2 chain</fullName>
    </alternativeName>
</protein>
<accession>P20245</accession>
<comment type="function">
    <text>Involved in oxygen transport from the lung to the various peripheral tissues.</text>
</comment>
<comment type="subunit">
    <text>Heterotetramer of two alpha chains and two beta chains.</text>
</comment>
<comment type="tissue specificity">
    <text>Red blood cells.</text>
</comment>
<comment type="similarity">
    <text evidence="1">Belongs to the globin family.</text>
</comment>
<evidence type="ECO:0000255" key="1">
    <source>
        <dbReference type="PROSITE-ProRule" id="PRU00238"/>
    </source>
</evidence>
<name>HBA2_TORMA</name>
<keyword id="KW-0903">Direct protein sequencing</keyword>
<keyword id="KW-0349">Heme</keyword>
<keyword id="KW-0408">Iron</keyword>
<keyword id="KW-0479">Metal-binding</keyword>
<keyword id="KW-0561">Oxygen transport</keyword>
<keyword id="KW-0813">Transport</keyword>
<dbReference type="SMR" id="P20245"/>
<dbReference type="GO" id="GO:0072562">
    <property type="term" value="C:blood microparticle"/>
    <property type="evidence" value="ECO:0007669"/>
    <property type="project" value="TreeGrafter"/>
</dbReference>
<dbReference type="GO" id="GO:0031838">
    <property type="term" value="C:haptoglobin-hemoglobin complex"/>
    <property type="evidence" value="ECO:0007669"/>
    <property type="project" value="TreeGrafter"/>
</dbReference>
<dbReference type="GO" id="GO:0005833">
    <property type="term" value="C:hemoglobin complex"/>
    <property type="evidence" value="ECO:0007669"/>
    <property type="project" value="InterPro"/>
</dbReference>
<dbReference type="GO" id="GO:0031720">
    <property type="term" value="F:haptoglobin binding"/>
    <property type="evidence" value="ECO:0007669"/>
    <property type="project" value="TreeGrafter"/>
</dbReference>
<dbReference type="GO" id="GO:0020037">
    <property type="term" value="F:heme binding"/>
    <property type="evidence" value="ECO:0007669"/>
    <property type="project" value="InterPro"/>
</dbReference>
<dbReference type="GO" id="GO:0046872">
    <property type="term" value="F:metal ion binding"/>
    <property type="evidence" value="ECO:0007669"/>
    <property type="project" value="UniProtKB-KW"/>
</dbReference>
<dbReference type="GO" id="GO:0043177">
    <property type="term" value="F:organic acid binding"/>
    <property type="evidence" value="ECO:0007669"/>
    <property type="project" value="TreeGrafter"/>
</dbReference>
<dbReference type="GO" id="GO:0019825">
    <property type="term" value="F:oxygen binding"/>
    <property type="evidence" value="ECO:0007669"/>
    <property type="project" value="InterPro"/>
</dbReference>
<dbReference type="GO" id="GO:0005344">
    <property type="term" value="F:oxygen carrier activity"/>
    <property type="evidence" value="ECO:0007669"/>
    <property type="project" value="UniProtKB-KW"/>
</dbReference>
<dbReference type="GO" id="GO:0004601">
    <property type="term" value="F:peroxidase activity"/>
    <property type="evidence" value="ECO:0007669"/>
    <property type="project" value="TreeGrafter"/>
</dbReference>
<dbReference type="GO" id="GO:0042744">
    <property type="term" value="P:hydrogen peroxide catabolic process"/>
    <property type="evidence" value="ECO:0007669"/>
    <property type="project" value="TreeGrafter"/>
</dbReference>
<dbReference type="CDD" id="cd08927">
    <property type="entry name" value="Hb-alpha-like"/>
    <property type="match status" value="1"/>
</dbReference>
<dbReference type="Gene3D" id="1.10.490.10">
    <property type="entry name" value="Globins"/>
    <property type="match status" value="1"/>
</dbReference>
<dbReference type="InterPro" id="IPR000971">
    <property type="entry name" value="Globin"/>
</dbReference>
<dbReference type="InterPro" id="IPR009050">
    <property type="entry name" value="Globin-like_sf"/>
</dbReference>
<dbReference type="InterPro" id="IPR012292">
    <property type="entry name" value="Globin/Proto"/>
</dbReference>
<dbReference type="InterPro" id="IPR002338">
    <property type="entry name" value="Hemoglobin_a-typ"/>
</dbReference>
<dbReference type="InterPro" id="IPR050056">
    <property type="entry name" value="Hemoglobin_oxygen_transport"/>
</dbReference>
<dbReference type="PANTHER" id="PTHR11442">
    <property type="entry name" value="HEMOGLOBIN FAMILY MEMBER"/>
    <property type="match status" value="1"/>
</dbReference>
<dbReference type="Pfam" id="PF00042">
    <property type="entry name" value="Globin"/>
    <property type="match status" value="1"/>
</dbReference>
<dbReference type="PRINTS" id="PR00612">
    <property type="entry name" value="ALPHAHAEM"/>
</dbReference>
<dbReference type="SUPFAM" id="SSF46458">
    <property type="entry name" value="Globin-like"/>
    <property type="match status" value="1"/>
</dbReference>
<dbReference type="PROSITE" id="PS01033">
    <property type="entry name" value="GLOBIN"/>
    <property type="match status" value="1"/>
</dbReference>
<reference key="1">
    <citation type="journal article" date="1989" name="Biol. Chem. Hoppe-Seyler">
        <title>The primary structure of electric ray hemoglobin (Torpedo marmorata). Bohr effect and phosphate interaction.</title>
        <authorList>
            <person name="Huber F."/>
            <person name="Braunitzer G."/>
        </authorList>
    </citation>
    <scope>PROTEIN SEQUENCE</scope>
</reference>